<comment type="function">
    <text evidence="1">Catalyzes the formation of 4-diphosphocytidyl-2-C-methyl-D-erythritol from CTP and 2-C-methyl-D-erythritol 4-phosphate (MEP).</text>
</comment>
<comment type="catalytic activity">
    <reaction evidence="1">
        <text>2-C-methyl-D-erythritol 4-phosphate + CTP + H(+) = 4-CDP-2-C-methyl-D-erythritol + diphosphate</text>
        <dbReference type="Rhea" id="RHEA:13429"/>
        <dbReference type="ChEBI" id="CHEBI:15378"/>
        <dbReference type="ChEBI" id="CHEBI:33019"/>
        <dbReference type="ChEBI" id="CHEBI:37563"/>
        <dbReference type="ChEBI" id="CHEBI:57823"/>
        <dbReference type="ChEBI" id="CHEBI:58262"/>
        <dbReference type="EC" id="2.7.7.60"/>
    </reaction>
</comment>
<comment type="pathway">
    <text evidence="1">Isoprenoid biosynthesis; isopentenyl diphosphate biosynthesis via DXP pathway; isopentenyl diphosphate from 1-deoxy-D-xylulose 5-phosphate: step 2/6.</text>
</comment>
<comment type="similarity">
    <text evidence="1">Belongs to the IspD/TarI cytidylyltransferase family. IspD subfamily.</text>
</comment>
<keyword id="KW-0414">Isoprene biosynthesis</keyword>
<keyword id="KW-0548">Nucleotidyltransferase</keyword>
<keyword id="KW-0808">Transferase</keyword>
<accession>Q65Q78</accession>
<sequence length="228" mass="25495">MTRHSRPIIAVVPAAGVGSRMQADKPKQYLTLLGKTLLEHTLEVLLSYTPIQQIILAVAENDPYLDQLDVIRQPKIKIVQGGRDRAGSVFNGLKAITQPHAWVMVHDAARPCLTHEDLDKLLQIEDDNGGILAIPAVDTIKRASAEKQIIQTEDRSQLWQAQTPQFFRADLLYRALQQAFEHGLAVTDEASAMEFAGFRPHLVAGRSDNLKVTRPEDLKLAEFYLSRK</sequence>
<reference key="1">
    <citation type="journal article" date="2004" name="Nat. Biotechnol.">
        <title>The genome sequence of the capnophilic rumen bacterium Mannheimia succiniciproducens.</title>
        <authorList>
            <person name="Hong S.H."/>
            <person name="Kim J.S."/>
            <person name="Lee S.Y."/>
            <person name="In Y.H."/>
            <person name="Choi S.S."/>
            <person name="Rih J.-K."/>
            <person name="Kim C.H."/>
            <person name="Jeong H."/>
            <person name="Hur C.G."/>
            <person name="Kim J.J."/>
        </authorList>
    </citation>
    <scope>NUCLEOTIDE SEQUENCE [LARGE SCALE GENOMIC DNA]</scope>
    <source>
        <strain>KCTC 0769BP / MBEL55E</strain>
    </source>
</reference>
<name>ISPD_MANSM</name>
<dbReference type="EC" id="2.7.7.60" evidence="1"/>
<dbReference type="EMBL" id="AE016827">
    <property type="protein sequence ID" value="AAU38882.1"/>
    <property type="molecule type" value="Genomic_DNA"/>
</dbReference>
<dbReference type="RefSeq" id="WP_011201424.1">
    <property type="nucleotide sequence ID" value="NC_006300.1"/>
</dbReference>
<dbReference type="SMR" id="Q65Q78"/>
<dbReference type="STRING" id="221988.MS2275"/>
<dbReference type="KEGG" id="msu:MS2275"/>
<dbReference type="eggNOG" id="COG1211">
    <property type="taxonomic scope" value="Bacteria"/>
</dbReference>
<dbReference type="HOGENOM" id="CLU_061281_3_1_6"/>
<dbReference type="OrthoDB" id="9806837at2"/>
<dbReference type="UniPathway" id="UPA00056">
    <property type="reaction ID" value="UER00093"/>
</dbReference>
<dbReference type="Proteomes" id="UP000000607">
    <property type="component" value="Chromosome"/>
</dbReference>
<dbReference type="GO" id="GO:0050518">
    <property type="term" value="F:2-C-methyl-D-erythritol 4-phosphate cytidylyltransferase activity"/>
    <property type="evidence" value="ECO:0007669"/>
    <property type="project" value="UniProtKB-UniRule"/>
</dbReference>
<dbReference type="GO" id="GO:0019288">
    <property type="term" value="P:isopentenyl diphosphate biosynthetic process, methylerythritol 4-phosphate pathway"/>
    <property type="evidence" value="ECO:0007669"/>
    <property type="project" value="UniProtKB-UniRule"/>
</dbReference>
<dbReference type="CDD" id="cd02516">
    <property type="entry name" value="CDP-ME_synthetase"/>
    <property type="match status" value="1"/>
</dbReference>
<dbReference type="FunFam" id="3.90.550.10:FF:000003">
    <property type="entry name" value="2-C-methyl-D-erythritol 4-phosphate cytidylyltransferase"/>
    <property type="match status" value="1"/>
</dbReference>
<dbReference type="Gene3D" id="3.90.550.10">
    <property type="entry name" value="Spore Coat Polysaccharide Biosynthesis Protein SpsA, Chain A"/>
    <property type="match status" value="1"/>
</dbReference>
<dbReference type="HAMAP" id="MF_00108">
    <property type="entry name" value="IspD"/>
    <property type="match status" value="1"/>
</dbReference>
<dbReference type="InterPro" id="IPR001228">
    <property type="entry name" value="IspD"/>
</dbReference>
<dbReference type="InterPro" id="IPR034683">
    <property type="entry name" value="IspD/TarI"/>
</dbReference>
<dbReference type="InterPro" id="IPR050088">
    <property type="entry name" value="IspD/TarI_cytidylyltransf_bact"/>
</dbReference>
<dbReference type="InterPro" id="IPR018294">
    <property type="entry name" value="ISPD_synthase_CS"/>
</dbReference>
<dbReference type="InterPro" id="IPR029044">
    <property type="entry name" value="Nucleotide-diphossugar_trans"/>
</dbReference>
<dbReference type="NCBIfam" id="TIGR00453">
    <property type="entry name" value="ispD"/>
    <property type="match status" value="1"/>
</dbReference>
<dbReference type="PANTHER" id="PTHR32125">
    <property type="entry name" value="2-C-METHYL-D-ERYTHRITOL 4-PHOSPHATE CYTIDYLYLTRANSFERASE, CHLOROPLASTIC"/>
    <property type="match status" value="1"/>
</dbReference>
<dbReference type="PANTHER" id="PTHR32125:SF4">
    <property type="entry name" value="2-C-METHYL-D-ERYTHRITOL 4-PHOSPHATE CYTIDYLYLTRANSFERASE, CHLOROPLASTIC"/>
    <property type="match status" value="1"/>
</dbReference>
<dbReference type="Pfam" id="PF01128">
    <property type="entry name" value="IspD"/>
    <property type="match status" value="1"/>
</dbReference>
<dbReference type="SUPFAM" id="SSF53448">
    <property type="entry name" value="Nucleotide-diphospho-sugar transferases"/>
    <property type="match status" value="1"/>
</dbReference>
<dbReference type="PROSITE" id="PS01295">
    <property type="entry name" value="ISPD"/>
    <property type="match status" value="1"/>
</dbReference>
<evidence type="ECO:0000255" key="1">
    <source>
        <dbReference type="HAMAP-Rule" id="MF_00108"/>
    </source>
</evidence>
<gene>
    <name evidence="1" type="primary">ispD</name>
    <name type="ordered locus">MS2275</name>
</gene>
<proteinExistence type="inferred from homology"/>
<protein>
    <recommendedName>
        <fullName evidence="1">2-C-methyl-D-erythritol 4-phosphate cytidylyltransferase</fullName>
        <ecNumber evidence="1">2.7.7.60</ecNumber>
    </recommendedName>
    <alternativeName>
        <fullName evidence="1">4-diphosphocytidyl-2C-methyl-D-erythritol synthase</fullName>
    </alternativeName>
    <alternativeName>
        <fullName evidence="1">MEP cytidylyltransferase</fullName>
        <shortName evidence="1">MCT</shortName>
    </alternativeName>
</protein>
<organism>
    <name type="scientific">Mannheimia succiniciproducens (strain KCTC 0769BP / MBEL55E)</name>
    <dbReference type="NCBI Taxonomy" id="221988"/>
    <lineage>
        <taxon>Bacteria</taxon>
        <taxon>Pseudomonadati</taxon>
        <taxon>Pseudomonadota</taxon>
        <taxon>Gammaproteobacteria</taxon>
        <taxon>Pasteurellales</taxon>
        <taxon>Pasteurellaceae</taxon>
        <taxon>Basfia</taxon>
    </lineage>
</organism>
<feature type="chain" id="PRO_0000237796" description="2-C-methyl-D-erythritol 4-phosphate cytidylyltransferase">
    <location>
        <begin position="1"/>
        <end position="228"/>
    </location>
</feature>
<feature type="site" description="Transition state stabilizer" evidence="1">
    <location>
        <position position="20"/>
    </location>
</feature>
<feature type="site" description="Transition state stabilizer" evidence="1">
    <location>
        <position position="27"/>
    </location>
</feature>
<feature type="site" description="Positions MEP for the nucleophilic attack" evidence="1">
    <location>
        <position position="155"/>
    </location>
</feature>
<feature type="site" description="Positions MEP for the nucleophilic attack" evidence="1">
    <location>
        <position position="211"/>
    </location>
</feature>